<evidence type="ECO:0000255" key="1">
    <source>
        <dbReference type="HAMAP-Rule" id="MF_01849"/>
    </source>
</evidence>
<evidence type="ECO:0000255" key="2">
    <source>
        <dbReference type="PROSITE-ProRule" id="PRU01266"/>
    </source>
</evidence>
<accession>C5BET4</accession>
<organism>
    <name type="scientific">Edwardsiella ictaluri (strain 93-146)</name>
    <dbReference type="NCBI Taxonomy" id="634503"/>
    <lineage>
        <taxon>Bacteria</taxon>
        <taxon>Pseudomonadati</taxon>
        <taxon>Pseudomonadota</taxon>
        <taxon>Gammaproteobacteria</taxon>
        <taxon>Enterobacterales</taxon>
        <taxon>Hafniaceae</taxon>
        <taxon>Edwardsiella</taxon>
    </lineage>
</organism>
<name>RLMN_EDWI9</name>
<protein>
    <recommendedName>
        <fullName evidence="1">Dual-specificity RNA methyltransferase RlmN</fullName>
        <ecNumber evidence="1">2.1.1.192</ecNumber>
    </recommendedName>
    <alternativeName>
        <fullName evidence="1">23S rRNA (adenine(2503)-C(2))-methyltransferase</fullName>
    </alternativeName>
    <alternativeName>
        <fullName evidence="1">23S rRNA m2A2503 methyltransferase</fullName>
    </alternativeName>
    <alternativeName>
        <fullName evidence="1">Ribosomal RNA large subunit methyltransferase N</fullName>
    </alternativeName>
    <alternativeName>
        <fullName evidence="1">tRNA (adenine(37)-C(2))-methyltransferase</fullName>
    </alternativeName>
    <alternativeName>
        <fullName evidence="1">tRNA m2A37 methyltransferase</fullName>
    </alternativeName>
</protein>
<proteinExistence type="inferred from homology"/>
<comment type="function">
    <text evidence="1">Specifically methylates position 2 of adenine 2503 in 23S rRNA and position 2 of adenine 37 in tRNAs. m2A2503 modification seems to play a crucial role in the proofreading step occurring at the peptidyl transferase center and thus would serve to optimize ribosomal fidelity.</text>
</comment>
<comment type="catalytic activity">
    <reaction evidence="1">
        <text>adenosine(2503) in 23S rRNA + 2 reduced [2Fe-2S]-[ferredoxin] + 2 S-adenosyl-L-methionine = 2-methyladenosine(2503) in 23S rRNA + 5'-deoxyadenosine + L-methionine + 2 oxidized [2Fe-2S]-[ferredoxin] + S-adenosyl-L-homocysteine</text>
        <dbReference type="Rhea" id="RHEA:42916"/>
        <dbReference type="Rhea" id="RHEA-COMP:10000"/>
        <dbReference type="Rhea" id="RHEA-COMP:10001"/>
        <dbReference type="Rhea" id="RHEA-COMP:10152"/>
        <dbReference type="Rhea" id="RHEA-COMP:10282"/>
        <dbReference type="ChEBI" id="CHEBI:17319"/>
        <dbReference type="ChEBI" id="CHEBI:33737"/>
        <dbReference type="ChEBI" id="CHEBI:33738"/>
        <dbReference type="ChEBI" id="CHEBI:57844"/>
        <dbReference type="ChEBI" id="CHEBI:57856"/>
        <dbReference type="ChEBI" id="CHEBI:59789"/>
        <dbReference type="ChEBI" id="CHEBI:74411"/>
        <dbReference type="ChEBI" id="CHEBI:74497"/>
        <dbReference type="EC" id="2.1.1.192"/>
    </reaction>
</comment>
<comment type="catalytic activity">
    <reaction evidence="1">
        <text>adenosine(37) in tRNA + 2 reduced [2Fe-2S]-[ferredoxin] + 2 S-adenosyl-L-methionine = 2-methyladenosine(37) in tRNA + 5'-deoxyadenosine + L-methionine + 2 oxidized [2Fe-2S]-[ferredoxin] + S-adenosyl-L-homocysteine</text>
        <dbReference type="Rhea" id="RHEA:43332"/>
        <dbReference type="Rhea" id="RHEA-COMP:10000"/>
        <dbReference type="Rhea" id="RHEA-COMP:10001"/>
        <dbReference type="Rhea" id="RHEA-COMP:10162"/>
        <dbReference type="Rhea" id="RHEA-COMP:10485"/>
        <dbReference type="ChEBI" id="CHEBI:17319"/>
        <dbReference type="ChEBI" id="CHEBI:33737"/>
        <dbReference type="ChEBI" id="CHEBI:33738"/>
        <dbReference type="ChEBI" id="CHEBI:57844"/>
        <dbReference type="ChEBI" id="CHEBI:57856"/>
        <dbReference type="ChEBI" id="CHEBI:59789"/>
        <dbReference type="ChEBI" id="CHEBI:74411"/>
        <dbReference type="ChEBI" id="CHEBI:74497"/>
        <dbReference type="EC" id="2.1.1.192"/>
    </reaction>
</comment>
<comment type="cofactor">
    <cofactor evidence="1">
        <name>[4Fe-4S] cluster</name>
        <dbReference type="ChEBI" id="CHEBI:49883"/>
    </cofactor>
    <text evidence="1">Binds 1 [4Fe-4S] cluster. The cluster is coordinated with 3 cysteines and an exchangeable S-adenosyl-L-methionine.</text>
</comment>
<comment type="subcellular location">
    <subcellularLocation>
        <location evidence="1">Cytoplasm</location>
    </subcellularLocation>
</comment>
<comment type="miscellaneous">
    <text evidence="1">Reaction proceeds by a ping-pong mechanism involving intermediate methylation of a conserved cysteine residue.</text>
</comment>
<comment type="similarity">
    <text evidence="1">Belongs to the radical SAM superfamily. RlmN family.</text>
</comment>
<reference key="1">
    <citation type="submission" date="2009-03" db="EMBL/GenBank/DDBJ databases">
        <title>Complete genome sequence of Edwardsiella ictaluri 93-146.</title>
        <authorList>
            <person name="Williams M.L."/>
            <person name="Gillaspy A.F."/>
            <person name="Dyer D.W."/>
            <person name="Thune R.L."/>
            <person name="Waldbieser G.C."/>
            <person name="Schuster S.C."/>
            <person name="Gipson J."/>
            <person name="Zaitshik J."/>
            <person name="Landry C."/>
            <person name="Lawrence M.L."/>
        </authorList>
    </citation>
    <scope>NUCLEOTIDE SEQUENCE [LARGE SCALE GENOMIC DNA]</scope>
    <source>
        <strain>93-146</strain>
    </source>
</reference>
<dbReference type="EC" id="2.1.1.192" evidence="1"/>
<dbReference type="EMBL" id="CP001600">
    <property type="protein sequence ID" value="ACR70322.1"/>
    <property type="molecule type" value="Genomic_DNA"/>
</dbReference>
<dbReference type="RefSeq" id="WP_015872410.1">
    <property type="nucleotide sequence ID" value="NZ_CP169062.1"/>
</dbReference>
<dbReference type="SMR" id="C5BET4"/>
<dbReference type="STRING" id="67780.B6E78_07525"/>
<dbReference type="KEGG" id="eic:NT01EI_3172"/>
<dbReference type="PATRIC" id="fig|634503.3.peg.2833"/>
<dbReference type="HOGENOM" id="CLU_029101_0_0_6"/>
<dbReference type="Proteomes" id="UP000001485">
    <property type="component" value="Chromosome"/>
</dbReference>
<dbReference type="GO" id="GO:0005737">
    <property type="term" value="C:cytoplasm"/>
    <property type="evidence" value="ECO:0007669"/>
    <property type="project" value="UniProtKB-SubCell"/>
</dbReference>
<dbReference type="GO" id="GO:0051539">
    <property type="term" value="F:4 iron, 4 sulfur cluster binding"/>
    <property type="evidence" value="ECO:0007669"/>
    <property type="project" value="UniProtKB-UniRule"/>
</dbReference>
<dbReference type="GO" id="GO:0046872">
    <property type="term" value="F:metal ion binding"/>
    <property type="evidence" value="ECO:0007669"/>
    <property type="project" value="UniProtKB-KW"/>
</dbReference>
<dbReference type="GO" id="GO:0070040">
    <property type="term" value="F:rRNA (adenine(2503)-C2-)-methyltransferase activity"/>
    <property type="evidence" value="ECO:0007669"/>
    <property type="project" value="UniProtKB-UniRule"/>
</dbReference>
<dbReference type="GO" id="GO:0019843">
    <property type="term" value="F:rRNA binding"/>
    <property type="evidence" value="ECO:0007669"/>
    <property type="project" value="UniProtKB-UniRule"/>
</dbReference>
<dbReference type="GO" id="GO:0002935">
    <property type="term" value="F:tRNA (adenine(37)-C2)-methyltransferase activity"/>
    <property type="evidence" value="ECO:0007669"/>
    <property type="project" value="UniProtKB-UniRule"/>
</dbReference>
<dbReference type="GO" id="GO:0000049">
    <property type="term" value="F:tRNA binding"/>
    <property type="evidence" value="ECO:0007669"/>
    <property type="project" value="UniProtKB-UniRule"/>
</dbReference>
<dbReference type="GO" id="GO:0070475">
    <property type="term" value="P:rRNA base methylation"/>
    <property type="evidence" value="ECO:0007669"/>
    <property type="project" value="UniProtKB-UniRule"/>
</dbReference>
<dbReference type="GO" id="GO:0030488">
    <property type="term" value="P:tRNA methylation"/>
    <property type="evidence" value="ECO:0007669"/>
    <property type="project" value="UniProtKB-UniRule"/>
</dbReference>
<dbReference type="CDD" id="cd01335">
    <property type="entry name" value="Radical_SAM"/>
    <property type="match status" value="1"/>
</dbReference>
<dbReference type="FunFam" id="1.10.150.530:FF:000003">
    <property type="entry name" value="Dual-specificity RNA methyltransferase RlmN"/>
    <property type="match status" value="1"/>
</dbReference>
<dbReference type="FunFam" id="3.20.20.70:FF:000008">
    <property type="entry name" value="Dual-specificity RNA methyltransferase RlmN"/>
    <property type="match status" value="1"/>
</dbReference>
<dbReference type="Gene3D" id="1.10.150.530">
    <property type="match status" value="1"/>
</dbReference>
<dbReference type="Gene3D" id="3.20.20.70">
    <property type="entry name" value="Aldolase class I"/>
    <property type="match status" value="1"/>
</dbReference>
<dbReference type="HAMAP" id="MF_01849">
    <property type="entry name" value="RNA_methyltr_RlmN"/>
    <property type="match status" value="1"/>
</dbReference>
<dbReference type="InterPro" id="IPR013785">
    <property type="entry name" value="Aldolase_TIM"/>
</dbReference>
<dbReference type="InterPro" id="IPR040072">
    <property type="entry name" value="Methyltransferase_A"/>
</dbReference>
<dbReference type="InterPro" id="IPR048641">
    <property type="entry name" value="RlmN_N"/>
</dbReference>
<dbReference type="InterPro" id="IPR027492">
    <property type="entry name" value="RNA_MTrfase_RlmN"/>
</dbReference>
<dbReference type="InterPro" id="IPR004383">
    <property type="entry name" value="rRNA_lsu_MTrfase_RlmN/Cfr"/>
</dbReference>
<dbReference type="InterPro" id="IPR007197">
    <property type="entry name" value="rSAM"/>
</dbReference>
<dbReference type="NCBIfam" id="NF008396">
    <property type="entry name" value="PRK11194.1"/>
    <property type="match status" value="1"/>
</dbReference>
<dbReference type="NCBIfam" id="TIGR00048">
    <property type="entry name" value="rRNA_mod_RlmN"/>
    <property type="match status" value="1"/>
</dbReference>
<dbReference type="PANTHER" id="PTHR30544">
    <property type="entry name" value="23S RRNA METHYLTRANSFERASE"/>
    <property type="match status" value="1"/>
</dbReference>
<dbReference type="PANTHER" id="PTHR30544:SF5">
    <property type="entry name" value="RADICAL SAM CORE DOMAIN-CONTAINING PROTEIN"/>
    <property type="match status" value="1"/>
</dbReference>
<dbReference type="Pfam" id="PF04055">
    <property type="entry name" value="Radical_SAM"/>
    <property type="match status" value="1"/>
</dbReference>
<dbReference type="Pfam" id="PF21016">
    <property type="entry name" value="RlmN_N"/>
    <property type="match status" value="1"/>
</dbReference>
<dbReference type="PIRSF" id="PIRSF006004">
    <property type="entry name" value="CHP00048"/>
    <property type="match status" value="1"/>
</dbReference>
<dbReference type="SFLD" id="SFLDF00275">
    <property type="entry name" value="adenosine_C2_methyltransferase"/>
    <property type="match status" value="1"/>
</dbReference>
<dbReference type="SFLD" id="SFLDG01062">
    <property type="entry name" value="methyltransferase_(Class_A)"/>
    <property type="match status" value="1"/>
</dbReference>
<dbReference type="SUPFAM" id="SSF102114">
    <property type="entry name" value="Radical SAM enzymes"/>
    <property type="match status" value="1"/>
</dbReference>
<dbReference type="PROSITE" id="PS51918">
    <property type="entry name" value="RADICAL_SAM"/>
    <property type="match status" value="1"/>
</dbReference>
<keyword id="KW-0004">4Fe-4S</keyword>
<keyword id="KW-0963">Cytoplasm</keyword>
<keyword id="KW-1015">Disulfide bond</keyword>
<keyword id="KW-0408">Iron</keyword>
<keyword id="KW-0411">Iron-sulfur</keyword>
<keyword id="KW-0479">Metal-binding</keyword>
<keyword id="KW-0489">Methyltransferase</keyword>
<keyword id="KW-0698">rRNA processing</keyword>
<keyword id="KW-0949">S-adenosyl-L-methionine</keyword>
<keyword id="KW-0808">Transferase</keyword>
<keyword id="KW-0819">tRNA processing</keyword>
<sequence length="390" mass="43571">MSDIHVTPVFADAAPCASPAPEKINLLDLDRRQMREFFVQMGEKPFRADQIMKWIYHYCCDDFDAMTDINKVLRARLKQVAEIRAPEVAVEQRSSDGTIKWALQVGDQRVETVYIPEDDRATLCVSSQVGCALECKFCSTAQQGFNRNLRVSEIIGQVWRAAKIIGAQKVTGNRPITNVVMMGMGEPLLNLTNVIPAMEIMLDDFGFGLSKRRVTLSTSGVVPALDKLGDTIDVALAISLHAPNDTIRDEIVPINRKYNIDMFLGSVRRYLEKSNANQGRVTVEYVMLDHINDGTEHAHQLAECLKDTPCKINLIPWNPFPGAPFGRSSNSRIDRFSKVLMEYGFTVIVRKTRGDDIDAACGQLAGEVIDRTKRTLKKQAAGEPINVREV</sequence>
<feature type="chain" id="PRO_1000216118" description="Dual-specificity RNA methyltransferase RlmN">
    <location>
        <begin position="1"/>
        <end position="390"/>
    </location>
</feature>
<feature type="domain" description="Radical SAM core" evidence="2">
    <location>
        <begin position="117"/>
        <end position="356"/>
    </location>
</feature>
<feature type="active site" description="Proton acceptor" evidence="1">
    <location>
        <position position="111"/>
    </location>
</feature>
<feature type="active site" description="S-methylcysteine intermediate" evidence="1">
    <location>
        <position position="361"/>
    </location>
</feature>
<feature type="binding site" evidence="1">
    <location>
        <position position="131"/>
    </location>
    <ligand>
        <name>[4Fe-4S] cluster</name>
        <dbReference type="ChEBI" id="CHEBI:49883"/>
        <note>4Fe-4S-S-AdoMet</note>
    </ligand>
</feature>
<feature type="binding site" evidence="1">
    <location>
        <position position="135"/>
    </location>
    <ligand>
        <name>[4Fe-4S] cluster</name>
        <dbReference type="ChEBI" id="CHEBI:49883"/>
        <note>4Fe-4S-S-AdoMet</note>
    </ligand>
</feature>
<feature type="binding site" evidence="1">
    <location>
        <position position="138"/>
    </location>
    <ligand>
        <name>[4Fe-4S] cluster</name>
        <dbReference type="ChEBI" id="CHEBI:49883"/>
        <note>4Fe-4S-S-AdoMet</note>
    </ligand>
</feature>
<feature type="binding site" evidence="1">
    <location>
        <begin position="185"/>
        <end position="186"/>
    </location>
    <ligand>
        <name>S-adenosyl-L-methionine</name>
        <dbReference type="ChEBI" id="CHEBI:59789"/>
    </ligand>
</feature>
<feature type="binding site" evidence="1">
    <location>
        <position position="217"/>
    </location>
    <ligand>
        <name>S-adenosyl-L-methionine</name>
        <dbReference type="ChEBI" id="CHEBI:59789"/>
    </ligand>
</feature>
<feature type="binding site" evidence="1">
    <location>
        <begin position="239"/>
        <end position="241"/>
    </location>
    <ligand>
        <name>S-adenosyl-L-methionine</name>
        <dbReference type="ChEBI" id="CHEBI:59789"/>
    </ligand>
</feature>
<feature type="binding site" evidence="1">
    <location>
        <position position="318"/>
    </location>
    <ligand>
        <name>S-adenosyl-L-methionine</name>
        <dbReference type="ChEBI" id="CHEBI:59789"/>
    </ligand>
</feature>
<feature type="disulfide bond" description="(transient)" evidence="1">
    <location>
        <begin position="124"/>
        <end position="361"/>
    </location>
</feature>
<gene>
    <name evidence="1" type="primary">rlmN</name>
    <name type="ordered locus">NT01EI_3172</name>
</gene>